<comment type="function">
    <text evidence="2">Transaldolase is important for the balance of metabolites in the pentose-phosphate pathway.</text>
</comment>
<comment type="catalytic activity">
    <reaction evidence="2">
        <text>D-sedoheptulose 7-phosphate + D-glyceraldehyde 3-phosphate = D-erythrose 4-phosphate + beta-D-fructose 6-phosphate</text>
        <dbReference type="Rhea" id="RHEA:17053"/>
        <dbReference type="ChEBI" id="CHEBI:16897"/>
        <dbReference type="ChEBI" id="CHEBI:57483"/>
        <dbReference type="ChEBI" id="CHEBI:57634"/>
        <dbReference type="ChEBI" id="CHEBI:59776"/>
        <dbReference type="EC" id="2.2.1.2"/>
    </reaction>
</comment>
<comment type="pathway">
    <text evidence="2">Carbohydrate degradation; pentose phosphate pathway; D-glyceraldehyde 3-phosphate and beta-D-fructose 6-phosphate from D-ribose 5-phosphate and D-xylulose 5-phosphate (non-oxidative stage): step 2/3.</text>
</comment>
<comment type="subunit">
    <text evidence="1">Homodimer.</text>
</comment>
<comment type="subcellular location">
    <subcellularLocation>
        <location evidence="2">Cytoplasm</location>
    </subcellularLocation>
</comment>
<comment type="similarity">
    <text evidence="2">Belongs to the transaldolase family. Type 1 subfamily.</text>
</comment>
<evidence type="ECO:0000250" key="1"/>
<evidence type="ECO:0000255" key="2">
    <source>
        <dbReference type="HAMAP-Rule" id="MF_00492"/>
    </source>
</evidence>
<sequence>MSQLDALREMTVVVADTGDIEAIKQYQPQDATTNPSLILNASALPQYASLIDDAVAYAKAKSDDKAQQLIDAEDKLAVNIGLEILKIVPGRISTEVDARLSYDTEATIEKARQIMKLYNDAGISNDRILIKIASTWQGIRAAEVLEKEGINCNLTLLFSQAQARACAEAGVYLISPFVGRILDWYKAAEKKEYAPAEDPGVISVTNIYNYYKQYGYQTVVMGASFRNVGEITEIAGCDRLTIAPPLLKELAESNAPLVRKLEYKGEVKARPAPLTEAEFYWQHNQDPMAVEKLAEGIRKFAVDIEKLEAMLAAKL</sequence>
<protein>
    <recommendedName>
        <fullName evidence="2">Transaldolase</fullName>
        <ecNumber evidence="2">2.2.1.2</ecNumber>
    </recommendedName>
</protein>
<accession>B0BRM0</accession>
<reference key="1">
    <citation type="journal article" date="2008" name="PLoS ONE">
        <title>Genome biology of Actinobacillus pleuropneumoniae JL03, an isolate of serotype 3 prevalent in China.</title>
        <authorList>
            <person name="Xu Z."/>
            <person name="Zhou Y."/>
            <person name="Li L."/>
            <person name="Zhou R."/>
            <person name="Xiao S."/>
            <person name="Wan Y."/>
            <person name="Zhang S."/>
            <person name="Wang K."/>
            <person name="Li W."/>
            <person name="Li L."/>
            <person name="Jin H."/>
            <person name="Kang M."/>
            <person name="Dalai B."/>
            <person name="Li T."/>
            <person name="Liu L."/>
            <person name="Cheng Y."/>
            <person name="Zhang L."/>
            <person name="Xu T."/>
            <person name="Zheng H."/>
            <person name="Pu S."/>
            <person name="Wang B."/>
            <person name="Gu W."/>
            <person name="Zhang X.L."/>
            <person name="Zhu G.-F."/>
            <person name="Wang S."/>
            <person name="Zhao G.-P."/>
            <person name="Chen H."/>
        </authorList>
    </citation>
    <scope>NUCLEOTIDE SEQUENCE [LARGE SCALE GENOMIC DNA]</scope>
    <source>
        <strain>JL03</strain>
    </source>
</reference>
<dbReference type="EC" id="2.2.1.2" evidence="2"/>
<dbReference type="EMBL" id="CP000687">
    <property type="protein sequence ID" value="ABY68668.1"/>
    <property type="molecule type" value="Genomic_DNA"/>
</dbReference>
<dbReference type="RefSeq" id="WP_012262678.1">
    <property type="nucleotide sequence ID" value="NC_010278.1"/>
</dbReference>
<dbReference type="SMR" id="B0BRM0"/>
<dbReference type="KEGG" id="apj:APJL_0062"/>
<dbReference type="HOGENOM" id="CLU_047470_0_1_6"/>
<dbReference type="UniPathway" id="UPA00115">
    <property type="reaction ID" value="UER00414"/>
</dbReference>
<dbReference type="Proteomes" id="UP000008547">
    <property type="component" value="Chromosome"/>
</dbReference>
<dbReference type="GO" id="GO:0005829">
    <property type="term" value="C:cytosol"/>
    <property type="evidence" value="ECO:0007669"/>
    <property type="project" value="TreeGrafter"/>
</dbReference>
<dbReference type="GO" id="GO:0004801">
    <property type="term" value="F:transaldolase activity"/>
    <property type="evidence" value="ECO:0000250"/>
    <property type="project" value="UniProtKB"/>
</dbReference>
<dbReference type="GO" id="GO:0005975">
    <property type="term" value="P:carbohydrate metabolic process"/>
    <property type="evidence" value="ECO:0007669"/>
    <property type="project" value="InterPro"/>
</dbReference>
<dbReference type="GO" id="GO:0006098">
    <property type="term" value="P:pentose-phosphate shunt"/>
    <property type="evidence" value="ECO:0007669"/>
    <property type="project" value="UniProtKB-UniRule"/>
</dbReference>
<dbReference type="CDD" id="cd00957">
    <property type="entry name" value="Transaldolase_TalAB"/>
    <property type="match status" value="1"/>
</dbReference>
<dbReference type="FunFam" id="3.20.20.70:FF:000002">
    <property type="entry name" value="Transaldolase"/>
    <property type="match status" value="1"/>
</dbReference>
<dbReference type="Gene3D" id="3.20.20.70">
    <property type="entry name" value="Aldolase class I"/>
    <property type="match status" value="1"/>
</dbReference>
<dbReference type="HAMAP" id="MF_00492">
    <property type="entry name" value="Transaldolase_1"/>
    <property type="match status" value="1"/>
</dbReference>
<dbReference type="InterPro" id="IPR013785">
    <property type="entry name" value="Aldolase_TIM"/>
</dbReference>
<dbReference type="InterPro" id="IPR001585">
    <property type="entry name" value="TAL/FSA"/>
</dbReference>
<dbReference type="InterPro" id="IPR004730">
    <property type="entry name" value="Transaldolase_1"/>
</dbReference>
<dbReference type="InterPro" id="IPR018225">
    <property type="entry name" value="Transaldolase_AS"/>
</dbReference>
<dbReference type="NCBIfam" id="NF009001">
    <property type="entry name" value="PRK12346.1"/>
    <property type="match status" value="1"/>
</dbReference>
<dbReference type="NCBIfam" id="TIGR00874">
    <property type="entry name" value="talAB"/>
    <property type="match status" value="1"/>
</dbReference>
<dbReference type="PANTHER" id="PTHR10683">
    <property type="entry name" value="TRANSALDOLASE"/>
    <property type="match status" value="1"/>
</dbReference>
<dbReference type="PANTHER" id="PTHR10683:SF18">
    <property type="entry name" value="TRANSALDOLASE"/>
    <property type="match status" value="1"/>
</dbReference>
<dbReference type="Pfam" id="PF00923">
    <property type="entry name" value="TAL_FSA"/>
    <property type="match status" value="1"/>
</dbReference>
<dbReference type="SUPFAM" id="SSF51569">
    <property type="entry name" value="Aldolase"/>
    <property type="match status" value="1"/>
</dbReference>
<dbReference type="PROSITE" id="PS01054">
    <property type="entry name" value="TRANSALDOLASE_1"/>
    <property type="match status" value="1"/>
</dbReference>
<dbReference type="PROSITE" id="PS00958">
    <property type="entry name" value="TRANSALDOLASE_2"/>
    <property type="match status" value="1"/>
</dbReference>
<feature type="chain" id="PRO_1000126233" description="Transaldolase">
    <location>
        <begin position="1"/>
        <end position="315"/>
    </location>
</feature>
<feature type="active site" description="Schiff-base intermediate with substrate" evidence="2">
    <location>
        <position position="131"/>
    </location>
</feature>
<gene>
    <name evidence="2" type="primary">tal</name>
    <name type="ordered locus">APJL_0062</name>
</gene>
<name>TAL_ACTPJ</name>
<proteinExistence type="inferred from homology"/>
<organism>
    <name type="scientific">Actinobacillus pleuropneumoniae serotype 3 (strain JL03)</name>
    <dbReference type="NCBI Taxonomy" id="434271"/>
    <lineage>
        <taxon>Bacteria</taxon>
        <taxon>Pseudomonadati</taxon>
        <taxon>Pseudomonadota</taxon>
        <taxon>Gammaproteobacteria</taxon>
        <taxon>Pasteurellales</taxon>
        <taxon>Pasteurellaceae</taxon>
        <taxon>Actinobacillus</taxon>
    </lineage>
</organism>
<keyword id="KW-0963">Cytoplasm</keyword>
<keyword id="KW-0570">Pentose shunt</keyword>
<keyword id="KW-0704">Schiff base</keyword>
<keyword id="KW-0808">Transferase</keyword>